<comment type="function">
    <text evidence="5">Transcriptional activator involved in jasmonate (JA) signaling pathway during spikelet development. Binds to the G2 region G-box (5'-CACGTG-3') of the MADS1 promoter and thus directly regulates the expression of MADS1. Its function in MADS1 activation is abolished by TIFY3/JAZ1 which directly target MYC2 during spikelet development.</text>
</comment>
<comment type="subunit">
    <text evidence="5">Interacts with TIFY3/JAZ1.</text>
</comment>
<comment type="subcellular location">
    <subcellularLocation>
        <location evidence="3">Nucleus</location>
    </subcellularLocation>
</comment>
<comment type="tissue specificity">
    <text evidence="5">Highly expressed in spikelets and floral organs.</text>
</comment>
<comment type="similarity">
    <text>Belongs to the bHLH protein family.</text>
</comment>
<comment type="sequence caution" evidence="8">
    <conflict type="erroneous initiation">
        <sequence resource="EMBL-CDS" id="AAK00453"/>
    </conflict>
    <text>Truncated N-terminus.</text>
</comment>
<evidence type="ECO:0000250" key="1">
    <source>
        <dbReference type="UniProtKB" id="Q39204"/>
    </source>
</evidence>
<evidence type="ECO:0000255" key="2"/>
<evidence type="ECO:0000255" key="3">
    <source>
        <dbReference type="PROSITE-ProRule" id="PRU00981"/>
    </source>
</evidence>
<evidence type="ECO:0000256" key="4">
    <source>
        <dbReference type="SAM" id="MobiDB-lite"/>
    </source>
</evidence>
<evidence type="ECO:0000269" key="5">
    <source>
    </source>
</evidence>
<evidence type="ECO:0000303" key="6">
    <source>
    </source>
</evidence>
<evidence type="ECO:0000303" key="7">
    <source>
    </source>
</evidence>
<evidence type="ECO:0000305" key="8"/>
<evidence type="ECO:0000312" key="9">
    <source>
        <dbReference type="EMBL" id="AAK00453.1"/>
    </source>
</evidence>
<evidence type="ECO:0000312" key="10">
    <source>
        <dbReference type="EMBL" id="ABB48017.1"/>
    </source>
</evidence>
<evidence type="ECO:0000312" key="11">
    <source>
        <dbReference type="EMBL" id="BAF27315.1"/>
    </source>
</evidence>
<accession>Q336P5</accession>
<accession>A0A0P0XY34</accession>
<accession>Q6QJB9</accession>
<accession>Q9AYK0</accession>
<dbReference type="EMBL" id="AY536428">
    <property type="protein sequence ID" value="AAS66204.1"/>
    <property type="molecule type" value="mRNA"/>
</dbReference>
<dbReference type="EMBL" id="AC060755">
    <property type="protein sequence ID" value="AAK00453.1"/>
    <property type="status" value="ALT_INIT"/>
    <property type="molecule type" value="Genomic_DNA"/>
</dbReference>
<dbReference type="EMBL" id="DP000086">
    <property type="protein sequence ID" value="ABB48017.1"/>
    <property type="molecule type" value="Genomic_DNA"/>
</dbReference>
<dbReference type="EMBL" id="AP008216">
    <property type="protein sequence ID" value="BAF27315.1"/>
    <property type="molecule type" value="Genomic_DNA"/>
</dbReference>
<dbReference type="EMBL" id="AP014966">
    <property type="protein sequence ID" value="BAT12190.1"/>
    <property type="molecule type" value="Genomic_DNA"/>
</dbReference>
<dbReference type="RefSeq" id="XP_015614012.1">
    <property type="nucleotide sequence ID" value="XM_015758526.1"/>
</dbReference>
<dbReference type="SMR" id="Q336P5"/>
<dbReference type="FunCoup" id="Q336P5">
    <property type="interactions" value="1858"/>
</dbReference>
<dbReference type="STRING" id="39947.Q336P5"/>
<dbReference type="PaxDb" id="39947-Q336P5"/>
<dbReference type="EnsemblPlants" id="Os10t0575000-01">
    <property type="protein sequence ID" value="Os10t0575000-01"/>
    <property type="gene ID" value="Os10g0575000"/>
</dbReference>
<dbReference type="Gramene" id="Os10t0575000-01">
    <property type="protein sequence ID" value="Os10t0575000-01"/>
    <property type="gene ID" value="Os10g0575000"/>
</dbReference>
<dbReference type="KEGG" id="dosa:Os10g0575000"/>
<dbReference type="KEGG" id="osa:4349484"/>
<dbReference type="eggNOG" id="ENOG502QUFW">
    <property type="taxonomic scope" value="Eukaryota"/>
</dbReference>
<dbReference type="HOGENOM" id="CLU_021132_0_1_1"/>
<dbReference type="InParanoid" id="Q336P5"/>
<dbReference type="OMA" id="HQIQHFE"/>
<dbReference type="OrthoDB" id="1926382at2759"/>
<dbReference type="PlantReactome" id="R-OSA-6787011">
    <property type="pathway name" value="Jasmonic acid signaling"/>
</dbReference>
<dbReference type="Proteomes" id="UP000000763">
    <property type="component" value="Chromosome 10"/>
</dbReference>
<dbReference type="Proteomes" id="UP000059680">
    <property type="component" value="Chromosome 10"/>
</dbReference>
<dbReference type="GO" id="GO:0005634">
    <property type="term" value="C:nucleus"/>
    <property type="evidence" value="ECO:0000318"/>
    <property type="project" value="GO_Central"/>
</dbReference>
<dbReference type="GO" id="GO:0003700">
    <property type="term" value="F:DNA-binding transcription factor activity"/>
    <property type="evidence" value="ECO:0000318"/>
    <property type="project" value="GO_Central"/>
</dbReference>
<dbReference type="GO" id="GO:0046983">
    <property type="term" value="F:protein dimerization activity"/>
    <property type="evidence" value="ECO:0007669"/>
    <property type="project" value="InterPro"/>
</dbReference>
<dbReference type="GO" id="GO:0000976">
    <property type="term" value="F:transcription cis-regulatory region binding"/>
    <property type="evidence" value="ECO:0000318"/>
    <property type="project" value="GO_Central"/>
</dbReference>
<dbReference type="GO" id="GO:0006355">
    <property type="term" value="P:regulation of DNA-templated transcription"/>
    <property type="evidence" value="ECO:0000318"/>
    <property type="project" value="GO_Central"/>
</dbReference>
<dbReference type="CDD" id="cd11449">
    <property type="entry name" value="bHLH_AtAIB_like"/>
    <property type="match status" value="1"/>
</dbReference>
<dbReference type="FunFam" id="4.10.280.10:FF:000078">
    <property type="entry name" value="Transcription factor bHLH13"/>
    <property type="match status" value="1"/>
</dbReference>
<dbReference type="Gene3D" id="4.10.280.10">
    <property type="entry name" value="Helix-loop-helix DNA-binding domain"/>
    <property type="match status" value="1"/>
</dbReference>
<dbReference type="InterPro" id="IPR045084">
    <property type="entry name" value="AIB/MYC-like"/>
</dbReference>
<dbReference type="InterPro" id="IPR054502">
    <property type="entry name" value="bHLH-TF_ACT-like_plant"/>
</dbReference>
<dbReference type="InterPro" id="IPR011598">
    <property type="entry name" value="bHLH_dom"/>
</dbReference>
<dbReference type="InterPro" id="IPR036638">
    <property type="entry name" value="HLH_DNA-bd_sf"/>
</dbReference>
<dbReference type="InterPro" id="IPR025610">
    <property type="entry name" value="MYC/MYB_N"/>
</dbReference>
<dbReference type="PANTHER" id="PTHR11514">
    <property type="entry name" value="MYC"/>
    <property type="match status" value="1"/>
</dbReference>
<dbReference type="PANTHER" id="PTHR11514:SF43">
    <property type="entry name" value="TRANSCRIPTION FACTOR MYC2"/>
    <property type="match status" value="1"/>
</dbReference>
<dbReference type="Pfam" id="PF14215">
    <property type="entry name" value="bHLH-MYC_N"/>
    <property type="match status" value="1"/>
</dbReference>
<dbReference type="Pfam" id="PF22754">
    <property type="entry name" value="bHLH-TF_ACT-like_plant"/>
    <property type="match status" value="1"/>
</dbReference>
<dbReference type="Pfam" id="PF00010">
    <property type="entry name" value="HLH"/>
    <property type="match status" value="1"/>
</dbReference>
<dbReference type="SMART" id="SM00353">
    <property type="entry name" value="HLH"/>
    <property type="match status" value="1"/>
</dbReference>
<dbReference type="SUPFAM" id="SSF47459">
    <property type="entry name" value="HLH, helix-loop-helix DNA-binding domain"/>
    <property type="match status" value="1"/>
</dbReference>
<dbReference type="PROSITE" id="PS50888">
    <property type="entry name" value="BHLH"/>
    <property type="match status" value="1"/>
</dbReference>
<reference key="1">
    <citation type="submission" date="2004-01" db="EMBL/GenBank/DDBJ databases">
        <title>Oryza sativa MYC protein mRNA, complete cds.</title>
        <authorList>
            <person name="Zhu Z."/>
        </authorList>
    </citation>
    <scope>NUCLEOTIDE SEQUENCE [MRNA]</scope>
</reference>
<reference key="2">
    <citation type="journal article" date="2003" name="Science">
        <title>In-depth view of structure, activity, and evolution of rice chromosome 10.</title>
        <authorList>
            <person name="Yu Y."/>
            <person name="Rambo T."/>
            <person name="Currie J."/>
            <person name="Saski C."/>
            <person name="Kim H.-R."/>
            <person name="Collura K."/>
            <person name="Thompson S."/>
            <person name="Simmons J."/>
            <person name="Yang T.-J."/>
            <person name="Nah G."/>
            <person name="Patel A.J."/>
            <person name="Thurmond S."/>
            <person name="Henry D."/>
            <person name="Oates R."/>
            <person name="Palmer M."/>
            <person name="Pries G."/>
            <person name="Gibson J."/>
            <person name="Anderson H."/>
            <person name="Paradkar M."/>
            <person name="Crane L."/>
            <person name="Dale J."/>
            <person name="Carver M.B."/>
            <person name="Wood T."/>
            <person name="Frisch D."/>
            <person name="Engler F."/>
            <person name="Soderlund C."/>
            <person name="Palmer L.E."/>
            <person name="Teytelman L."/>
            <person name="Nascimento L."/>
            <person name="De la Bastide M."/>
            <person name="Spiegel L."/>
            <person name="Ware D."/>
            <person name="O'Shaughnessy A."/>
            <person name="Dike S."/>
            <person name="Dedhia N."/>
            <person name="Preston R."/>
            <person name="Huang E."/>
            <person name="Ferraro K."/>
            <person name="Kuit K."/>
            <person name="Miller B."/>
            <person name="Zutavern T."/>
            <person name="Katzenberger F."/>
            <person name="Muller S."/>
            <person name="Balija V."/>
            <person name="Martienssen R.A."/>
            <person name="Stein L."/>
            <person name="Minx P."/>
            <person name="Johnson D."/>
            <person name="Cordum H."/>
            <person name="Mardis E."/>
            <person name="Cheng Z."/>
            <person name="Jiang J."/>
            <person name="Wilson R."/>
            <person name="McCombie W.R."/>
            <person name="Wing R.A."/>
            <person name="Yuan Q."/>
            <person name="Ouyang S."/>
            <person name="Liu J."/>
            <person name="Jones K.M."/>
            <person name="Gansberger K."/>
            <person name="Moffat K."/>
            <person name="Hill J."/>
            <person name="Tsitrin T."/>
            <person name="Overton L."/>
            <person name="Bera J."/>
            <person name="Kim M."/>
            <person name="Jin S."/>
            <person name="Tallon L."/>
            <person name="Ciecko A."/>
            <person name="Pai G."/>
            <person name="Van Aken S."/>
            <person name="Utterback T."/>
            <person name="Reidmuller S."/>
            <person name="Bormann J."/>
            <person name="Feldblyum T."/>
            <person name="Hsiao J."/>
            <person name="Zismann V."/>
            <person name="Blunt S."/>
            <person name="de Vazeille A.R."/>
            <person name="Shaffer T."/>
            <person name="Koo H."/>
            <person name="Suh B."/>
            <person name="Yang Q."/>
            <person name="Haas B."/>
            <person name="Peterson J."/>
            <person name="Pertea M."/>
            <person name="Volfovsky N."/>
            <person name="Wortman J."/>
            <person name="White O."/>
            <person name="Salzberg S.L."/>
            <person name="Fraser C.M."/>
            <person name="Buell C.R."/>
            <person name="Messing J."/>
            <person name="Song R."/>
            <person name="Fuks G."/>
            <person name="Llaca V."/>
            <person name="Kovchak S."/>
            <person name="Young S."/>
            <person name="Bowers J.E."/>
            <person name="Paterson A.H."/>
            <person name="Johns M.A."/>
            <person name="Mao L."/>
            <person name="Pan H."/>
            <person name="Dean R.A."/>
        </authorList>
    </citation>
    <scope>NUCLEOTIDE SEQUENCE [LARGE SCALE GENOMIC DNA]</scope>
    <source>
        <strain>cv. Nipponbare</strain>
    </source>
</reference>
<reference key="3">
    <citation type="journal article" date="2005" name="Nature">
        <title>The map-based sequence of the rice genome.</title>
        <authorList>
            <consortium name="International rice genome sequencing project (IRGSP)"/>
        </authorList>
    </citation>
    <scope>NUCLEOTIDE SEQUENCE [LARGE SCALE GENOMIC DNA]</scope>
    <source>
        <strain>cv. Nipponbare</strain>
    </source>
</reference>
<reference key="4">
    <citation type="journal article" date="2008" name="Nucleic Acids Res.">
        <title>The rice annotation project database (RAP-DB): 2008 update.</title>
        <authorList>
            <consortium name="The rice annotation project (RAP)"/>
        </authorList>
    </citation>
    <scope>GENOME REANNOTATION</scope>
    <source>
        <strain>cv. Nipponbare</strain>
    </source>
</reference>
<reference key="5">
    <citation type="journal article" date="2013" name="Rice">
        <title>Improvement of the Oryza sativa Nipponbare reference genome using next generation sequence and optical map data.</title>
        <authorList>
            <person name="Kawahara Y."/>
            <person name="de la Bastide M."/>
            <person name="Hamilton J.P."/>
            <person name="Kanamori H."/>
            <person name="McCombie W.R."/>
            <person name="Ouyang S."/>
            <person name="Schwartz D.C."/>
            <person name="Tanaka T."/>
            <person name="Wu J."/>
            <person name="Zhou S."/>
            <person name="Childs K.L."/>
            <person name="Davidson R.M."/>
            <person name="Lin H."/>
            <person name="Quesada-Ocampo L."/>
            <person name="Vaillancourt B."/>
            <person name="Sakai H."/>
            <person name="Lee S.S."/>
            <person name="Kim J."/>
            <person name="Numa H."/>
            <person name="Itoh T."/>
            <person name="Buell C.R."/>
            <person name="Matsumoto T."/>
        </authorList>
    </citation>
    <scope>GENOME REANNOTATION</scope>
    <source>
        <strain>cv. Nipponbare</strain>
    </source>
</reference>
<reference key="6">
    <citation type="journal article" date="2006" name="Plant Physiol.">
        <title>Genome-wide analysis of basic/helix-loop-helix transcription factor family in rice and Arabidopsis.</title>
        <authorList>
            <person name="Li X."/>
            <person name="Duan X."/>
            <person name="Jiang H."/>
            <person name="Sun Y."/>
            <person name="Tang Y."/>
            <person name="Yuan Z."/>
            <person name="Guo J."/>
            <person name="Liang W."/>
            <person name="Chen L."/>
            <person name="Yin J."/>
            <person name="Ma H."/>
            <person name="Wang J."/>
            <person name="Zhang D."/>
        </authorList>
    </citation>
    <scope>GENE FAMILY</scope>
    <scope>NOMENCLATURE</scope>
</reference>
<reference key="7">
    <citation type="journal article" date="2014" name="Nat. Commun.">
        <title>Jasmonic acid regulates spikelet development in rice.</title>
        <authorList>
            <person name="Cai Q."/>
            <person name="Yuan Z."/>
            <person name="Chen M."/>
            <person name="Yin C."/>
            <person name="Luo Z."/>
            <person name="Zhao X."/>
            <person name="Liang W."/>
            <person name="Hu J."/>
            <person name="Zhang D."/>
        </authorList>
    </citation>
    <scope>FUNCTION</scope>
    <scope>INTERACTION WITH TIFY3/JAZ1</scope>
    <scope>TISSUE SPECIFICITY</scope>
</reference>
<gene>
    <name evidence="7" type="primary">MYC2</name>
    <name evidence="8" type="synonym">BHLH9</name>
    <name evidence="11" type="ordered locus">Os10g0575000</name>
    <name evidence="10" type="ordered locus">LOC_Os10g42430</name>
    <name evidence="9" type="ORF">OSJNBa0003O19.20</name>
</gene>
<organism>
    <name type="scientific">Oryza sativa subsp. japonica</name>
    <name type="common">Rice</name>
    <dbReference type="NCBI Taxonomy" id="39947"/>
    <lineage>
        <taxon>Eukaryota</taxon>
        <taxon>Viridiplantae</taxon>
        <taxon>Streptophyta</taxon>
        <taxon>Embryophyta</taxon>
        <taxon>Tracheophyta</taxon>
        <taxon>Spermatophyta</taxon>
        <taxon>Magnoliopsida</taxon>
        <taxon>Liliopsida</taxon>
        <taxon>Poales</taxon>
        <taxon>Poaceae</taxon>
        <taxon>BOP clade</taxon>
        <taxon>Oryzoideae</taxon>
        <taxon>Oryzeae</taxon>
        <taxon>Oryzinae</taxon>
        <taxon>Oryza</taxon>
        <taxon>Oryza sativa</taxon>
    </lineage>
</organism>
<feature type="chain" id="PRO_0000434865" description="Transcription factor MYC2">
    <location>
        <begin position="1"/>
        <end position="699"/>
    </location>
</feature>
<feature type="domain" description="bHLH" evidence="3">
    <location>
        <begin position="520"/>
        <end position="569"/>
    </location>
</feature>
<feature type="region of interest" description="Disordered" evidence="4">
    <location>
        <begin position="25"/>
        <end position="60"/>
    </location>
</feature>
<feature type="region of interest" description="JAZ-interaction domain" evidence="1">
    <location>
        <begin position="93"/>
        <end position="158"/>
    </location>
</feature>
<feature type="region of interest" description="Disordered" evidence="4">
    <location>
        <begin position="290"/>
        <end position="530"/>
    </location>
</feature>
<feature type="region of interest" description="Basic motif; degenerate" evidence="3">
    <location>
        <begin position="520"/>
        <end position="533"/>
    </location>
</feature>
<feature type="region of interest" description="Helix-loop-helix motif" evidence="3">
    <location>
        <begin position="534"/>
        <end position="569"/>
    </location>
</feature>
<feature type="region of interest" description="Disordered" evidence="4">
    <location>
        <begin position="582"/>
        <end position="611"/>
    </location>
</feature>
<feature type="short sequence motif" description="Nuclear localization signal" evidence="2">
    <location>
        <begin position="506"/>
        <end position="514"/>
    </location>
</feature>
<feature type="compositionally biased region" description="Polar residues" evidence="4">
    <location>
        <begin position="306"/>
        <end position="321"/>
    </location>
</feature>
<feature type="compositionally biased region" description="Low complexity" evidence="4">
    <location>
        <begin position="335"/>
        <end position="349"/>
    </location>
</feature>
<feature type="compositionally biased region" description="Low complexity" evidence="4">
    <location>
        <begin position="387"/>
        <end position="412"/>
    </location>
</feature>
<feature type="compositionally biased region" description="Polar residues" evidence="4">
    <location>
        <begin position="413"/>
        <end position="449"/>
    </location>
</feature>
<feature type="compositionally biased region" description="Polar residues" evidence="4">
    <location>
        <begin position="459"/>
        <end position="472"/>
    </location>
</feature>
<feature type="compositionally biased region" description="Basic and acidic residues" evidence="4">
    <location>
        <begin position="478"/>
        <end position="494"/>
    </location>
</feature>
<feature type="compositionally biased region" description="Basic residues" evidence="4">
    <location>
        <begin position="507"/>
        <end position="516"/>
    </location>
</feature>
<feature type="compositionally biased region" description="Basic and acidic residues" evidence="4">
    <location>
        <begin position="517"/>
        <end position="530"/>
    </location>
</feature>
<sequence length="699" mass="75104">MNLWTDDNASMMEAFMASADLPAFPWGAASTPPPPPPPPHHHHQQQQQQVLPPPAAAPAAAAFNQDTLQQRLQSIIEGSRETWTYAIFWQSSIDVSTGASLLGWGDGYYKGCDDDKRKQRSSTPAAAAEQEHRKRVLRELNSLIAGAGAAPDEAVEEEVTDTEWFFLVSMTQSFPNGLGLPGQALFAAQPTWIATGLSSAPCDRARQAYTFGLRTMVCLPLATGVLELGSTDVIFQTGDSIPRIRALFNLSAAAASSWPPHPDAASADPSVLWLADAPPMDMKDSISAADISVSKPPPPPPHQIQHFENGSTSTLTENPSPSVHAPTPSQPAAPPQRQQQQQQSSQAQQGPFRRELNFSDFASNGGAAAPPFFKPETGEILNFGNDSSSGRRNPSPAPPAATASLTTAPGSLFSQHTPTLTAAANDAKSNNQKRSMEATSRASNTNNHPAATANEGMLSFSSAPTTRPSTGTGAPAKSESDHSDLEASVREVESSRVVAPPPEAEKRPRKRGRKPANGREEPLNHVEAERQRREKLNQRFYALRAVVPNVSKMDKASLLGDAISYINELRGKLTALETDKETLQSQMESLKKERDARPPAPSGGGGDGGARCHAVEIEAKILGLEAMIRVQCHKRNHPAARLMTALRELDLDVYHASVSVVKDLMIQQVAVKMASRVYSQDQLNAALYTRIAEPGTAAR</sequence>
<name>MYC2_ORYSJ</name>
<proteinExistence type="evidence at protein level"/>
<protein>
    <recommendedName>
        <fullName evidence="8">Transcription factor MYC2</fullName>
        <shortName evidence="7">OsMYC2</shortName>
    </recommendedName>
    <alternativeName>
        <fullName evidence="6">Basic helix-loop-helix protein 9</fullName>
        <shortName evidence="6">OsbHLH009</shortName>
        <shortName evidence="8">bHLH 9</shortName>
    </alternativeName>
</protein>
<keyword id="KW-0010">Activator</keyword>
<keyword id="KW-0238">DNA-binding</keyword>
<keyword id="KW-1184">Jasmonic acid signaling pathway</keyword>
<keyword id="KW-0539">Nucleus</keyword>
<keyword id="KW-1185">Reference proteome</keyword>
<keyword id="KW-0804">Transcription</keyword>
<keyword id="KW-0805">Transcription regulation</keyword>